<keyword id="KW-0012">Acyltransferase</keyword>
<keyword id="KW-0963">Cytoplasm</keyword>
<keyword id="KW-0408">Iron</keyword>
<keyword id="KW-0479">Metal-binding</keyword>
<keyword id="KW-0808">Transferase</keyword>
<keyword id="KW-0819">tRNA processing</keyword>
<name>TSAD_BRUA1</name>
<dbReference type="EC" id="2.3.1.234" evidence="1"/>
<dbReference type="EMBL" id="CP000887">
    <property type="protein sequence ID" value="ACD73252.1"/>
    <property type="molecule type" value="Genomic_DNA"/>
</dbReference>
<dbReference type="RefSeq" id="WP_002966988.1">
    <property type="nucleotide sequence ID" value="NC_010742.1"/>
</dbReference>
<dbReference type="SMR" id="B2S843"/>
<dbReference type="GeneID" id="93017779"/>
<dbReference type="KEGG" id="bmc:BAbS19_I17700"/>
<dbReference type="HOGENOM" id="CLU_023208_0_2_5"/>
<dbReference type="Proteomes" id="UP000002565">
    <property type="component" value="Chromosome 1"/>
</dbReference>
<dbReference type="GO" id="GO:0005737">
    <property type="term" value="C:cytoplasm"/>
    <property type="evidence" value="ECO:0007669"/>
    <property type="project" value="UniProtKB-SubCell"/>
</dbReference>
<dbReference type="GO" id="GO:0005506">
    <property type="term" value="F:iron ion binding"/>
    <property type="evidence" value="ECO:0007669"/>
    <property type="project" value="UniProtKB-UniRule"/>
</dbReference>
<dbReference type="GO" id="GO:0061711">
    <property type="term" value="F:N(6)-L-threonylcarbamoyladenine synthase activity"/>
    <property type="evidence" value="ECO:0007669"/>
    <property type="project" value="UniProtKB-EC"/>
</dbReference>
<dbReference type="GO" id="GO:0002949">
    <property type="term" value="P:tRNA threonylcarbamoyladenosine modification"/>
    <property type="evidence" value="ECO:0007669"/>
    <property type="project" value="UniProtKB-UniRule"/>
</dbReference>
<dbReference type="CDD" id="cd24133">
    <property type="entry name" value="ASKHA_NBD_TsaD_bac"/>
    <property type="match status" value="1"/>
</dbReference>
<dbReference type="FunFam" id="3.30.420.40:FF:000040">
    <property type="entry name" value="tRNA N6-adenosine threonylcarbamoyltransferase"/>
    <property type="match status" value="1"/>
</dbReference>
<dbReference type="Gene3D" id="3.30.420.40">
    <property type="match status" value="2"/>
</dbReference>
<dbReference type="HAMAP" id="MF_01445">
    <property type="entry name" value="TsaD"/>
    <property type="match status" value="1"/>
</dbReference>
<dbReference type="InterPro" id="IPR043129">
    <property type="entry name" value="ATPase_NBD"/>
</dbReference>
<dbReference type="InterPro" id="IPR000905">
    <property type="entry name" value="Gcp-like_dom"/>
</dbReference>
<dbReference type="InterPro" id="IPR017861">
    <property type="entry name" value="KAE1/TsaD"/>
</dbReference>
<dbReference type="InterPro" id="IPR022450">
    <property type="entry name" value="TsaD"/>
</dbReference>
<dbReference type="NCBIfam" id="TIGR00329">
    <property type="entry name" value="gcp_kae1"/>
    <property type="match status" value="1"/>
</dbReference>
<dbReference type="NCBIfam" id="TIGR03723">
    <property type="entry name" value="T6A_TsaD_YgjD"/>
    <property type="match status" value="1"/>
</dbReference>
<dbReference type="PANTHER" id="PTHR11735">
    <property type="entry name" value="TRNA N6-ADENOSINE THREONYLCARBAMOYLTRANSFERASE"/>
    <property type="match status" value="1"/>
</dbReference>
<dbReference type="PANTHER" id="PTHR11735:SF6">
    <property type="entry name" value="TRNA N6-ADENOSINE THREONYLCARBAMOYLTRANSFERASE, MITOCHONDRIAL"/>
    <property type="match status" value="1"/>
</dbReference>
<dbReference type="Pfam" id="PF00814">
    <property type="entry name" value="TsaD"/>
    <property type="match status" value="1"/>
</dbReference>
<dbReference type="PRINTS" id="PR00789">
    <property type="entry name" value="OSIALOPTASE"/>
</dbReference>
<dbReference type="SUPFAM" id="SSF53067">
    <property type="entry name" value="Actin-like ATPase domain"/>
    <property type="match status" value="2"/>
</dbReference>
<gene>
    <name evidence="1" type="primary">tsaD</name>
    <name type="synonym">gcp</name>
    <name type="ordered locus">BAbS19_I17700</name>
</gene>
<comment type="function">
    <text evidence="1">Required for the formation of a threonylcarbamoyl group on adenosine at position 37 (t(6)A37) in tRNAs that read codons beginning with adenine. Is involved in the transfer of the threonylcarbamoyl moiety of threonylcarbamoyl-AMP (TC-AMP) to the N6 group of A37, together with TsaE and TsaB. TsaD likely plays a direct catalytic role in this reaction.</text>
</comment>
<comment type="catalytic activity">
    <reaction evidence="1">
        <text>L-threonylcarbamoyladenylate + adenosine(37) in tRNA = N(6)-L-threonylcarbamoyladenosine(37) in tRNA + AMP + H(+)</text>
        <dbReference type="Rhea" id="RHEA:37059"/>
        <dbReference type="Rhea" id="RHEA-COMP:10162"/>
        <dbReference type="Rhea" id="RHEA-COMP:10163"/>
        <dbReference type="ChEBI" id="CHEBI:15378"/>
        <dbReference type="ChEBI" id="CHEBI:73682"/>
        <dbReference type="ChEBI" id="CHEBI:74411"/>
        <dbReference type="ChEBI" id="CHEBI:74418"/>
        <dbReference type="ChEBI" id="CHEBI:456215"/>
        <dbReference type="EC" id="2.3.1.234"/>
    </reaction>
</comment>
<comment type="cofactor">
    <cofactor evidence="1">
        <name>Fe(2+)</name>
        <dbReference type="ChEBI" id="CHEBI:29033"/>
    </cofactor>
    <text evidence="1">Binds 1 Fe(2+) ion per subunit.</text>
</comment>
<comment type="subcellular location">
    <subcellularLocation>
        <location evidence="1">Cytoplasm</location>
    </subcellularLocation>
</comment>
<comment type="similarity">
    <text evidence="1">Belongs to the KAE1 / TsaD family.</text>
</comment>
<sequence length="359" mass="38013">MRVLGIETSCDETAAAIVERDDMGEGRILSNVVLSQIAEHEPYGGVVPEIAARAHVEALDRLVDRALNDAGLKLYEVDAVAATAGPGLIGGLIVGLMTAKALAMAAQKPFYAVNHLEGHALTARLTDGLPFPYLLLLVSGGHTQMVLVRGIGDYERLGTTIDDALGEAFDKTAKLLGLPYPGGPTVERMALQGDQKRFALPRPLKGEARLDFSFSGLKTAVRQTATELVPLTDQDVTDICASFQAAVADTLSDRVGRSLERFKTEFPDCATPSLVVAGGVAANKTLRAALENLCTRHGFAFIAPPLNLCTDNAAMIAWAGAERAATQAPDSLDIAPRSRWPLDEKSAPVFGTGRRGAKA</sequence>
<feature type="chain" id="PRO_1000145953" description="tRNA N6-adenosine threonylcarbamoyltransferase">
    <location>
        <begin position="1"/>
        <end position="359"/>
    </location>
</feature>
<feature type="region of interest" description="Disordered" evidence="2">
    <location>
        <begin position="328"/>
        <end position="359"/>
    </location>
</feature>
<feature type="binding site" evidence="1">
    <location>
        <position position="115"/>
    </location>
    <ligand>
        <name>Fe cation</name>
        <dbReference type="ChEBI" id="CHEBI:24875"/>
    </ligand>
</feature>
<feature type="binding site" evidence="1">
    <location>
        <position position="119"/>
    </location>
    <ligand>
        <name>Fe cation</name>
        <dbReference type="ChEBI" id="CHEBI:24875"/>
    </ligand>
</feature>
<feature type="binding site" evidence="1">
    <location>
        <begin position="137"/>
        <end position="141"/>
    </location>
    <ligand>
        <name>substrate</name>
    </ligand>
</feature>
<feature type="binding site" evidence="1">
    <location>
        <position position="170"/>
    </location>
    <ligand>
        <name>substrate</name>
    </ligand>
</feature>
<feature type="binding site" evidence="1">
    <location>
        <position position="183"/>
    </location>
    <ligand>
        <name>substrate</name>
    </ligand>
</feature>
<feature type="binding site" evidence="1">
    <location>
        <position position="283"/>
    </location>
    <ligand>
        <name>substrate</name>
    </ligand>
</feature>
<feature type="binding site" evidence="1">
    <location>
        <position position="311"/>
    </location>
    <ligand>
        <name>Fe cation</name>
        <dbReference type="ChEBI" id="CHEBI:24875"/>
    </ligand>
</feature>
<proteinExistence type="inferred from homology"/>
<organism>
    <name type="scientific">Brucella abortus (strain S19)</name>
    <dbReference type="NCBI Taxonomy" id="430066"/>
    <lineage>
        <taxon>Bacteria</taxon>
        <taxon>Pseudomonadati</taxon>
        <taxon>Pseudomonadota</taxon>
        <taxon>Alphaproteobacteria</taxon>
        <taxon>Hyphomicrobiales</taxon>
        <taxon>Brucellaceae</taxon>
        <taxon>Brucella/Ochrobactrum group</taxon>
        <taxon>Brucella</taxon>
    </lineage>
</organism>
<accession>B2S843</accession>
<protein>
    <recommendedName>
        <fullName evidence="1">tRNA N6-adenosine threonylcarbamoyltransferase</fullName>
        <ecNumber evidence="1">2.3.1.234</ecNumber>
    </recommendedName>
    <alternativeName>
        <fullName evidence="1">N6-L-threonylcarbamoyladenine synthase</fullName>
        <shortName evidence="1">t(6)A synthase</shortName>
    </alternativeName>
    <alternativeName>
        <fullName evidence="1">t(6)A37 threonylcarbamoyladenosine biosynthesis protein TsaD</fullName>
    </alternativeName>
    <alternativeName>
        <fullName evidence="1">tRNA threonylcarbamoyladenosine biosynthesis protein TsaD</fullName>
    </alternativeName>
</protein>
<reference key="1">
    <citation type="journal article" date="2008" name="PLoS ONE">
        <title>Genome sequence of Brucella abortus vaccine strain S19 compared to virulent strains yields candidate virulence genes.</title>
        <authorList>
            <person name="Crasta O.R."/>
            <person name="Folkerts O."/>
            <person name="Fei Z."/>
            <person name="Mane S.P."/>
            <person name="Evans C."/>
            <person name="Martino-Catt S."/>
            <person name="Bricker B."/>
            <person name="Yu G."/>
            <person name="Du L."/>
            <person name="Sobral B.W."/>
        </authorList>
    </citation>
    <scope>NUCLEOTIDE SEQUENCE [LARGE SCALE GENOMIC DNA]</scope>
    <source>
        <strain>S19</strain>
    </source>
</reference>
<evidence type="ECO:0000255" key="1">
    <source>
        <dbReference type="HAMAP-Rule" id="MF_01445"/>
    </source>
</evidence>
<evidence type="ECO:0000256" key="2">
    <source>
        <dbReference type="SAM" id="MobiDB-lite"/>
    </source>
</evidence>